<protein>
    <recommendedName>
        <fullName evidence="1">UPF0435 protein BAMEG_0475</fullName>
    </recommendedName>
</protein>
<accession>C3L658</accession>
<dbReference type="EMBL" id="CP001215">
    <property type="protein sequence ID" value="ACP14197.1"/>
    <property type="molecule type" value="Genomic_DNA"/>
</dbReference>
<dbReference type="RefSeq" id="WP_000366197.1">
    <property type="nucleotide sequence ID" value="NC_012581.1"/>
</dbReference>
<dbReference type="SMR" id="C3L658"/>
<dbReference type="KEGG" id="bah:BAMEG_0475"/>
<dbReference type="HOGENOM" id="CLU_199533_1_0_9"/>
<dbReference type="HAMAP" id="MF_00829">
    <property type="entry name" value="UPF0435"/>
    <property type="match status" value="1"/>
</dbReference>
<dbReference type="InterPro" id="IPR009507">
    <property type="entry name" value="UPF0435"/>
</dbReference>
<dbReference type="Pfam" id="PF06569">
    <property type="entry name" value="DUF1128"/>
    <property type="match status" value="1"/>
</dbReference>
<sequence length="74" mass="8652">MDLSVKSEENVEYMVEAIKEKLRMVNAGAMRAASFNEEMYEDLRDIYEHVMKRETFSISEMQAITEELGTLIKK</sequence>
<proteinExistence type="inferred from homology"/>
<feature type="chain" id="PRO_1000148773" description="UPF0435 protein BAMEG_0475">
    <location>
        <begin position="1"/>
        <end position="74"/>
    </location>
</feature>
<evidence type="ECO:0000255" key="1">
    <source>
        <dbReference type="HAMAP-Rule" id="MF_00829"/>
    </source>
</evidence>
<name>Y475_BACAC</name>
<gene>
    <name type="ordered locus">BAMEG_0475</name>
</gene>
<reference key="1">
    <citation type="submission" date="2008-10" db="EMBL/GenBank/DDBJ databases">
        <title>Genome sequence of Bacillus anthracis str. CDC 684.</title>
        <authorList>
            <person name="Dodson R.J."/>
            <person name="Munk A.C."/>
            <person name="Brettin T."/>
            <person name="Bruce D."/>
            <person name="Detter C."/>
            <person name="Tapia R."/>
            <person name="Han C."/>
            <person name="Sutton G."/>
            <person name="Sims D."/>
        </authorList>
    </citation>
    <scope>NUCLEOTIDE SEQUENCE [LARGE SCALE GENOMIC DNA]</scope>
    <source>
        <strain>CDC 684 / NRRL 3495</strain>
    </source>
</reference>
<organism>
    <name type="scientific">Bacillus anthracis (strain CDC 684 / NRRL 3495)</name>
    <dbReference type="NCBI Taxonomy" id="568206"/>
    <lineage>
        <taxon>Bacteria</taxon>
        <taxon>Bacillati</taxon>
        <taxon>Bacillota</taxon>
        <taxon>Bacilli</taxon>
        <taxon>Bacillales</taxon>
        <taxon>Bacillaceae</taxon>
        <taxon>Bacillus</taxon>
        <taxon>Bacillus cereus group</taxon>
    </lineage>
</organism>
<comment type="similarity">
    <text evidence="1">Belongs to the UPF0435 family.</text>
</comment>